<evidence type="ECO:0000255" key="1">
    <source>
        <dbReference type="HAMAP-Rule" id="MF_00262"/>
    </source>
</evidence>
<gene>
    <name evidence="1" type="primary">minE</name>
    <name type="ordered locus">Neut_1137</name>
</gene>
<name>MINE_NITEC</name>
<sequence>MSLLDYFKSSKSKTASVAKERLQILVAHERYYRNKPSYLPQLQEELMQVIRKYVQVDQDAISVKFEQDDNQETLELNITLPDTQNPRNTQQDMIRNAL</sequence>
<feature type="chain" id="PRO_0000298141" description="Cell division topological specificity factor">
    <location>
        <begin position="1"/>
        <end position="98"/>
    </location>
</feature>
<dbReference type="EMBL" id="CP000450">
    <property type="protein sequence ID" value="ABI59392.1"/>
    <property type="molecule type" value="Genomic_DNA"/>
</dbReference>
<dbReference type="RefSeq" id="WP_011634212.1">
    <property type="nucleotide sequence ID" value="NC_008344.1"/>
</dbReference>
<dbReference type="SMR" id="Q0AGZ0"/>
<dbReference type="STRING" id="335283.Neut_1137"/>
<dbReference type="KEGG" id="net:Neut_1137"/>
<dbReference type="eggNOG" id="COG0851">
    <property type="taxonomic scope" value="Bacteria"/>
</dbReference>
<dbReference type="HOGENOM" id="CLU_137929_2_1_4"/>
<dbReference type="OrthoDB" id="9802655at2"/>
<dbReference type="Proteomes" id="UP000001966">
    <property type="component" value="Chromosome"/>
</dbReference>
<dbReference type="GO" id="GO:0051301">
    <property type="term" value="P:cell division"/>
    <property type="evidence" value="ECO:0007669"/>
    <property type="project" value="UniProtKB-KW"/>
</dbReference>
<dbReference type="GO" id="GO:0032955">
    <property type="term" value="P:regulation of division septum assembly"/>
    <property type="evidence" value="ECO:0007669"/>
    <property type="project" value="InterPro"/>
</dbReference>
<dbReference type="FunFam" id="3.30.1070.10:FF:000001">
    <property type="entry name" value="Cell division topological specificity factor"/>
    <property type="match status" value="1"/>
</dbReference>
<dbReference type="Gene3D" id="3.30.1070.10">
    <property type="entry name" value="Cell division topological specificity factor MinE"/>
    <property type="match status" value="1"/>
</dbReference>
<dbReference type="HAMAP" id="MF_00262">
    <property type="entry name" value="MinE"/>
    <property type="match status" value="1"/>
</dbReference>
<dbReference type="InterPro" id="IPR005527">
    <property type="entry name" value="MinE"/>
</dbReference>
<dbReference type="InterPro" id="IPR036707">
    <property type="entry name" value="MinE_sf"/>
</dbReference>
<dbReference type="NCBIfam" id="TIGR01215">
    <property type="entry name" value="minE"/>
    <property type="match status" value="1"/>
</dbReference>
<dbReference type="NCBIfam" id="NF001422">
    <property type="entry name" value="PRK00296.1"/>
    <property type="match status" value="1"/>
</dbReference>
<dbReference type="Pfam" id="PF03776">
    <property type="entry name" value="MinE"/>
    <property type="match status" value="1"/>
</dbReference>
<dbReference type="SUPFAM" id="SSF55229">
    <property type="entry name" value="Cell division protein MinE topological specificity domain"/>
    <property type="match status" value="1"/>
</dbReference>
<keyword id="KW-0131">Cell cycle</keyword>
<keyword id="KW-0132">Cell division</keyword>
<protein>
    <recommendedName>
        <fullName evidence="1">Cell division topological specificity factor</fullName>
    </recommendedName>
</protein>
<organism>
    <name type="scientific">Nitrosomonas eutropha (strain DSM 101675 / C91 / Nm57)</name>
    <dbReference type="NCBI Taxonomy" id="335283"/>
    <lineage>
        <taxon>Bacteria</taxon>
        <taxon>Pseudomonadati</taxon>
        <taxon>Pseudomonadota</taxon>
        <taxon>Betaproteobacteria</taxon>
        <taxon>Nitrosomonadales</taxon>
        <taxon>Nitrosomonadaceae</taxon>
        <taxon>Nitrosomonas</taxon>
    </lineage>
</organism>
<comment type="function">
    <text evidence="1">Prevents the cell division inhibition by proteins MinC and MinD at internal division sites while permitting inhibition at polar sites. This ensures cell division at the proper site by restricting the formation of a division septum at the midpoint of the long axis of the cell.</text>
</comment>
<comment type="similarity">
    <text evidence="1">Belongs to the MinE family.</text>
</comment>
<proteinExistence type="inferred from homology"/>
<accession>Q0AGZ0</accession>
<reference key="1">
    <citation type="journal article" date="2007" name="Environ. Microbiol.">
        <title>Whole-genome analysis of the ammonia-oxidizing bacterium, Nitrosomonas eutropha C91: implications for niche adaptation.</title>
        <authorList>
            <person name="Stein L.Y."/>
            <person name="Arp D.J."/>
            <person name="Berube P.M."/>
            <person name="Chain P.S."/>
            <person name="Hauser L."/>
            <person name="Jetten M.S."/>
            <person name="Klotz M.G."/>
            <person name="Larimer F.W."/>
            <person name="Norton J.M."/>
            <person name="Op den Camp H.J.M."/>
            <person name="Shin M."/>
            <person name="Wei X."/>
        </authorList>
    </citation>
    <scope>NUCLEOTIDE SEQUENCE [LARGE SCALE GENOMIC DNA]</scope>
    <source>
        <strain>DSM 101675 / C91 / Nm57</strain>
    </source>
</reference>